<accession>A1S590</accession>
<protein>
    <recommendedName>
        <fullName evidence="1">UPF0434 protein Sama_1339</fullName>
    </recommendedName>
</protein>
<comment type="similarity">
    <text evidence="1">Belongs to the UPF0434 family.</text>
</comment>
<proteinExistence type="inferred from homology"/>
<organism>
    <name type="scientific">Shewanella amazonensis (strain ATCC BAA-1098 / SB2B)</name>
    <dbReference type="NCBI Taxonomy" id="326297"/>
    <lineage>
        <taxon>Bacteria</taxon>
        <taxon>Pseudomonadati</taxon>
        <taxon>Pseudomonadota</taxon>
        <taxon>Gammaproteobacteria</taxon>
        <taxon>Alteromonadales</taxon>
        <taxon>Shewanellaceae</taxon>
        <taxon>Shewanella</taxon>
    </lineage>
</organism>
<feature type="chain" id="PRO_0000291162" description="UPF0434 protein Sama_1339">
    <location>
        <begin position="1"/>
        <end position="61"/>
    </location>
</feature>
<gene>
    <name type="ordered locus">Sama_1339</name>
</gene>
<name>Y1339_SHEAM</name>
<reference key="1">
    <citation type="submission" date="2006-12" db="EMBL/GenBank/DDBJ databases">
        <title>Complete sequence of Shewanella amazonensis SB2B.</title>
        <authorList>
            <consortium name="US DOE Joint Genome Institute"/>
            <person name="Copeland A."/>
            <person name="Lucas S."/>
            <person name="Lapidus A."/>
            <person name="Barry K."/>
            <person name="Detter J.C."/>
            <person name="Glavina del Rio T."/>
            <person name="Hammon N."/>
            <person name="Israni S."/>
            <person name="Dalin E."/>
            <person name="Tice H."/>
            <person name="Pitluck S."/>
            <person name="Munk A.C."/>
            <person name="Brettin T."/>
            <person name="Bruce D."/>
            <person name="Han C."/>
            <person name="Tapia R."/>
            <person name="Gilna P."/>
            <person name="Schmutz J."/>
            <person name="Larimer F."/>
            <person name="Land M."/>
            <person name="Hauser L."/>
            <person name="Kyrpides N."/>
            <person name="Mikhailova N."/>
            <person name="Fredrickson J."/>
            <person name="Richardson P."/>
        </authorList>
    </citation>
    <scope>NUCLEOTIDE SEQUENCE [LARGE SCALE GENOMIC DNA]</scope>
    <source>
        <strain>ATCC BAA-1098 / SB2B</strain>
    </source>
</reference>
<evidence type="ECO:0000255" key="1">
    <source>
        <dbReference type="HAMAP-Rule" id="MF_01187"/>
    </source>
</evidence>
<dbReference type="EMBL" id="CP000507">
    <property type="protein sequence ID" value="ABL99546.1"/>
    <property type="molecule type" value="Genomic_DNA"/>
</dbReference>
<dbReference type="RefSeq" id="WP_011759454.1">
    <property type="nucleotide sequence ID" value="NC_008700.1"/>
</dbReference>
<dbReference type="SMR" id="A1S590"/>
<dbReference type="STRING" id="326297.Sama_1339"/>
<dbReference type="KEGG" id="saz:Sama_1339"/>
<dbReference type="eggNOG" id="COG2835">
    <property type="taxonomic scope" value="Bacteria"/>
</dbReference>
<dbReference type="HOGENOM" id="CLU_155659_3_1_6"/>
<dbReference type="OrthoDB" id="9812205at2"/>
<dbReference type="Proteomes" id="UP000009175">
    <property type="component" value="Chromosome"/>
</dbReference>
<dbReference type="GO" id="GO:0005829">
    <property type="term" value="C:cytosol"/>
    <property type="evidence" value="ECO:0007669"/>
    <property type="project" value="TreeGrafter"/>
</dbReference>
<dbReference type="FunFam" id="2.20.25.10:FF:000002">
    <property type="entry name" value="UPF0434 protein YcaR"/>
    <property type="match status" value="1"/>
</dbReference>
<dbReference type="Gene3D" id="2.20.25.10">
    <property type="match status" value="1"/>
</dbReference>
<dbReference type="HAMAP" id="MF_01187">
    <property type="entry name" value="UPF0434"/>
    <property type="match status" value="1"/>
</dbReference>
<dbReference type="InterPro" id="IPR005651">
    <property type="entry name" value="Trm112-like"/>
</dbReference>
<dbReference type="PANTHER" id="PTHR33505:SF4">
    <property type="entry name" value="PROTEIN PREY, MITOCHONDRIAL"/>
    <property type="match status" value="1"/>
</dbReference>
<dbReference type="PANTHER" id="PTHR33505">
    <property type="entry name" value="ZGC:162634"/>
    <property type="match status" value="1"/>
</dbReference>
<dbReference type="Pfam" id="PF03966">
    <property type="entry name" value="Trm112p"/>
    <property type="match status" value="1"/>
</dbReference>
<dbReference type="SUPFAM" id="SSF158997">
    <property type="entry name" value="Trm112p-like"/>
    <property type="match status" value="1"/>
</dbReference>
<keyword id="KW-1185">Reference proteome</keyword>
<sequence length="61" mass="6940">MAFDKKLLEIVACPVCKGKLEYDKAAEQLICKFDRLAYPITEGIPVLLENRATPWQEQTAE</sequence>